<name>OPLA_ARATH</name>
<reference key="1">
    <citation type="journal article" date="1998" name="DNA Res.">
        <title>Structural analysis of Arabidopsis thaliana chromosome 5. VII. Sequence features of the regions of 1,013,767 bp covered by sixteen physically assigned P1 and TAC clones.</title>
        <authorList>
            <person name="Nakamura Y."/>
            <person name="Sato S."/>
            <person name="Asamizu E."/>
            <person name="Kaneko T."/>
            <person name="Kotani H."/>
            <person name="Miyajima N."/>
            <person name="Tabata S."/>
        </authorList>
    </citation>
    <scope>NUCLEOTIDE SEQUENCE [LARGE SCALE GENOMIC DNA]</scope>
    <source>
        <strain>cv. Columbia</strain>
    </source>
</reference>
<reference key="2">
    <citation type="journal article" date="2017" name="Plant J.">
        <title>Araport11: a complete reannotation of the Arabidopsis thaliana reference genome.</title>
        <authorList>
            <person name="Cheng C.Y."/>
            <person name="Krishnakumar V."/>
            <person name="Chan A.P."/>
            <person name="Thibaud-Nissen F."/>
            <person name="Schobel S."/>
            <person name="Town C.D."/>
        </authorList>
    </citation>
    <scope>GENOME REANNOTATION</scope>
    <source>
        <strain>cv. Columbia</strain>
    </source>
</reference>
<reference key="3">
    <citation type="journal article" date="2003" name="Science">
        <title>Empirical analysis of transcriptional activity in the Arabidopsis genome.</title>
        <authorList>
            <person name="Yamada K."/>
            <person name="Lim J."/>
            <person name="Dale J.M."/>
            <person name="Chen H."/>
            <person name="Shinn P."/>
            <person name="Palm C.J."/>
            <person name="Southwick A.M."/>
            <person name="Wu H.C."/>
            <person name="Kim C.J."/>
            <person name="Nguyen M."/>
            <person name="Pham P.K."/>
            <person name="Cheuk R.F."/>
            <person name="Karlin-Newmann G."/>
            <person name="Liu S.X."/>
            <person name="Lam B."/>
            <person name="Sakano H."/>
            <person name="Wu T."/>
            <person name="Yu G."/>
            <person name="Miranda M."/>
            <person name="Quach H.L."/>
            <person name="Tripp M."/>
            <person name="Chang C.H."/>
            <person name="Lee J.M."/>
            <person name="Toriumi M.J."/>
            <person name="Chan M.M."/>
            <person name="Tang C.C."/>
            <person name="Onodera C.S."/>
            <person name="Deng J.M."/>
            <person name="Akiyama K."/>
            <person name="Ansari Y."/>
            <person name="Arakawa T."/>
            <person name="Banh J."/>
            <person name="Banno F."/>
            <person name="Bowser L."/>
            <person name="Brooks S.Y."/>
            <person name="Carninci P."/>
            <person name="Chao Q."/>
            <person name="Choy N."/>
            <person name="Enju A."/>
            <person name="Goldsmith A.D."/>
            <person name="Gurjal M."/>
            <person name="Hansen N.F."/>
            <person name="Hayashizaki Y."/>
            <person name="Johnson-Hopson C."/>
            <person name="Hsuan V.W."/>
            <person name="Iida K."/>
            <person name="Karnes M."/>
            <person name="Khan S."/>
            <person name="Koesema E."/>
            <person name="Ishida J."/>
            <person name="Jiang P.X."/>
            <person name="Jones T."/>
            <person name="Kawai J."/>
            <person name="Kamiya A."/>
            <person name="Meyers C."/>
            <person name="Nakajima M."/>
            <person name="Narusaka M."/>
            <person name="Seki M."/>
            <person name="Sakurai T."/>
            <person name="Satou M."/>
            <person name="Tamse R."/>
            <person name="Vaysberg M."/>
            <person name="Wallender E.K."/>
            <person name="Wong C."/>
            <person name="Yamamura Y."/>
            <person name="Yuan S."/>
            <person name="Shinozaki K."/>
            <person name="Davis R.W."/>
            <person name="Theologis A."/>
            <person name="Ecker J.R."/>
        </authorList>
    </citation>
    <scope>NUCLEOTIDE SEQUENCE [LARGE SCALE MRNA]</scope>
    <source>
        <strain>cv. Columbia</strain>
    </source>
</reference>
<reference key="4">
    <citation type="submission" date="2006-07" db="EMBL/GenBank/DDBJ databases">
        <title>Large-scale analysis of RIKEN Arabidopsis full-length (RAFL) cDNAs.</title>
        <authorList>
            <person name="Totoki Y."/>
            <person name="Seki M."/>
            <person name="Ishida J."/>
            <person name="Nakajima M."/>
            <person name="Enju A."/>
            <person name="Kamiya A."/>
            <person name="Narusaka M."/>
            <person name="Shin-i T."/>
            <person name="Nakagawa M."/>
            <person name="Sakamoto N."/>
            <person name="Oishi K."/>
            <person name="Kohara Y."/>
            <person name="Kobayashi M."/>
            <person name="Toyoda A."/>
            <person name="Sakaki Y."/>
            <person name="Sakurai T."/>
            <person name="Iida K."/>
            <person name="Akiyama K."/>
            <person name="Satou M."/>
            <person name="Toyoda T."/>
            <person name="Konagaya A."/>
            <person name="Carninci P."/>
            <person name="Kawai J."/>
            <person name="Hayashizaki Y."/>
            <person name="Shinozaki K."/>
        </authorList>
    </citation>
    <scope>NUCLEOTIDE SEQUENCE [LARGE SCALE MRNA] OF 1-963</scope>
    <source>
        <strain>cv. Columbia</strain>
    </source>
</reference>
<reference key="5">
    <citation type="journal article" date="2007" name="Mol. Cell. Proteomics">
        <title>Multidimensional protein identification technology (MudPIT) analysis of ubiquitinated proteins in plants.</title>
        <authorList>
            <person name="Maor R."/>
            <person name="Jones A."/>
            <person name="Nuehse T.S."/>
            <person name="Studholme D.J."/>
            <person name="Peck S.C."/>
            <person name="Shirasu K."/>
        </authorList>
    </citation>
    <scope>IDENTIFICATION BY MASS SPECTROMETRY [LARGE SCALE ANALYSIS]</scope>
    <source>
        <strain>cv. Landsberg erecta</strain>
    </source>
</reference>
<reference key="6">
    <citation type="journal article" date="2008" name="Plant Physiol.">
        <title>A gamma-glutamyl transpeptidase-independent pathway of glutathione catabolism to glutamate via 5-oxoproline in Arabidopsis.</title>
        <authorList>
            <person name="Ohkama-Ohtsu N."/>
            <person name="Oikawa A."/>
            <person name="Zhao P."/>
            <person name="Xiang C."/>
            <person name="Saito K."/>
            <person name="Oliver D.J."/>
        </authorList>
    </citation>
    <scope>FUNCTION</scope>
    <scope>DISRUPTION PHENOTYPE</scope>
    <scope>CATALYTIC ACTIVITY</scope>
    <scope>TISSUE SPECIFICITY</scope>
    <source>
        <strain>cv. Columbia</strain>
        <strain>cv. Landsberg erecta</strain>
    </source>
</reference>
<proteinExistence type="evidence at protein level"/>
<protein>
    <recommendedName>
        <fullName evidence="2">5-oxoprolinase 1</fullName>
        <ecNumber evidence="1">3.5.2.9</ecNumber>
    </recommendedName>
    <alternativeName>
        <fullName evidence="2">5-oxo-L-prolinase</fullName>
        <shortName evidence="2">5-OPase</shortName>
    </alternativeName>
    <alternativeName>
        <fullName evidence="2">Protein OXOPROLINASE 1</fullName>
    </alternativeName>
    <alternativeName>
        <fullName evidence="2">Pyroglutamase</fullName>
    </alternativeName>
</protein>
<sequence>MGTVIEGKLRFCIDRGGTFTDVYAEIPGHSDGHVLKLLSVDPSNYDDAPVEGIRRILEEYTGKKIPRTSKIPTDKIQWIRMGTTVATNALLERKGERIALCVTKGFKDLLQIGNQARPDIFDLTVAKPSNLYEEVIEVDERVVLALEDDDDDEGSLIKGVSGEFLRVVKPFDGEGLKPLLKGLLDKGISCLAVVLMHSYTYPKHEMDVEKLALEMGFRHVSLSSALTPMVRAVPRGLTATVDAYLTPVIKEYLSGFISKFDDDLGKVNVLFMQSDGGLAPESRFSGHKAVLSGPAGGVVGYSQTLFGLETEKPLIGFDMGGTSTDVSRYDGSYEQVIETQIAGTIIQAPQLDINTVAAGGGSKLKFQFGAFRVGPDSVGAHPGPVCYRKGGELAVTDANLVLGFVIPDYFPSIFGPNEDQPLDVAATREAFEKLAGQINIYRKSQDPSAKDMSVEEIAMGFVSVANETMCRPIRQLTEMKGHETKNHALACFGGAGPQHACAIARSLGMKEVLVHRYCGILSAYGMGLADVIEDAQEPYSAVYGPESLSEVFRRETVLLREVREKLQEQGFGDGNISTETYLNLRYDGTDTAIMVKGKKTGDGSAFDYAAEFLKLFEQEYGFKLQNRNLLICDVRVRGIGVTSILKPRAVEAAPVTPKVERHYKVYFEGGWHDTPLFKLENLGFGHEILGPAIIMNGNSTVIVEPQCKAIITKYGNIKIEVEPATSSVKLAENVADVVQLSIFNHRFMGIAEQMGRTLQRTSISTNIKERLDFSCALFSPDGGLVANAPHVPVHLGAMSSTVRWQLKHWGENLNEGDVLVTNHPCAGGSHLPDITVITPVFDKGKLVFFVASRGHHAEVGGITPGSMPPFSKAIWEEGAAIKAFKVVEKGVFQEEGIVKLLQFPSSDETTTKIPGTRRIQDNLSDLQAQIAANQRGISLIKELIEQYGLGTVQAYMKYVQLNAEEAVREMLKSVANRVSSETPNSRVGNSVTIEEEDYMDDGSIIHLKLTIDADKGEASFDFTGTSPEVYGNWNAPEAVTSAAVIYCLRCLVNVDIPLNQGCLAPVEIRIPAGSFLSPSEKAAVVGGNVLTSQRVTDVVLTAFQACACSQGCMNNLTFGDDTFGYYETIGGGCGAGPTWNGTSGVQCHMTNTRMTDPEIFEQRYPVLLHRFGLRENSGGNGLHKGGDGLVREIEFRKPVVVSILSERRVHSPRGLNGGQNGLRGANYLITKDKRRIYLGGKNTVHVEAGEILQILTPGGGGFGSNI</sequence>
<feature type="chain" id="PRO_0000380674" description="5-oxoprolinase 1">
    <location>
        <begin position="1"/>
        <end position="1266"/>
    </location>
</feature>
<dbReference type="EC" id="3.5.2.9" evidence="1"/>
<dbReference type="EMBL" id="AB016873">
    <property type="protein sequence ID" value="BAB10362.1"/>
    <property type="molecule type" value="Genomic_DNA"/>
</dbReference>
<dbReference type="EMBL" id="CP002688">
    <property type="protein sequence ID" value="AED94237.1"/>
    <property type="molecule type" value="Genomic_DNA"/>
</dbReference>
<dbReference type="EMBL" id="AY102096">
    <property type="protein sequence ID" value="AAM26666.1"/>
    <property type="molecule type" value="mRNA"/>
</dbReference>
<dbReference type="EMBL" id="BT004510">
    <property type="protein sequence ID" value="AAO42756.1"/>
    <property type="molecule type" value="mRNA"/>
</dbReference>
<dbReference type="EMBL" id="AK228904">
    <property type="protein sequence ID" value="BAF00793.1"/>
    <property type="molecule type" value="mRNA"/>
</dbReference>
<dbReference type="RefSeq" id="NP_198599.1">
    <property type="nucleotide sequence ID" value="NM_123142.5"/>
</dbReference>
<dbReference type="SMR" id="Q9FIZ7"/>
<dbReference type="BioGRID" id="19012">
    <property type="interactions" value="2"/>
</dbReference>
<dbReference type="FunCoup" id="Q9FIZ7">
    <property type="interactions" value="3062"/>
</dbReference>
<dbReference type="IntAct" id="Q9FIZ7">
    <property type="interactions" value="2"/>
</dbReference>
<dbReference type="STRING" id="3702.Q9FIZ7"/>
<dbReference type="iPTMnet" id="Q9FIZ7"/>
<dbReference type="PaxDb" id="3702-AT5G37830.1"/>
<dbReference type="ProteomicsDB" id="249367"/>
<dbReference type="EnsemblPlants" id="AT5G37830.1">
    <property type="protein sequence ID" value="AT5G37830.1"/>
    <property type="gene ID" value="AT5G37830"/>
</dbReference>
<dbReference type="GeneID" id="833761"/>
<dbReference type="Gramene" id="AT5G37830.1">
    <property type="protein sequence ID" value="AT5G37830.1"/>
    <property type="gene ID" value="AT5G37830"/>
</dbReference>
<dbReference type="KEGG" id="ath:AT5G37830"/>
<dbReference type="Araport" id="AT5G37830"/>
<dbReference type="TAIR" id="AT5G37830">
    <property type="gene designation" value="OXP1"/>
</dbReference>
<dbReference type="eggNOG" id="KOG1939">
    <property type="taxonomic scope" value="Eukaryota"/>
</dbReference>
<dbReference type="HOGENOM" id="CLU_002157_0_1_1"/>
<dbReference type="InParanoid" id="Q9FIZ7"/>
<dbReference type="OMA" id="TDCNVML"/>
<dbReference type="PhylomeDB" id="Q9FIZ7"/>
<dbReference type="BioCyc" id="ARA:AT5G37830-MONOMER"/>
<dbReference type="BRENDA" id="3.5.2.9">
    <property type="organism ID" value="399"/>
</dbReference>
<dbReference type="PRO" id="PR:Q9FIZ7"/>
<dbReference type="Proteomes" id="UP000006548">
    <property type="component" value="Chromosome 5"/>
</dbReference>
<dbReference type="ExpressionAtlas" id="Q9FIZ7">
    <property type="expression patterns" value="baseline and differential"/>
</dbReference>
<dbReference type="GO" id="GO:0005737">
    <property type="term" value="C:cytoplasm"/>
    <property type="evidence" value="ECO:0000303"/>
    <property type="project" value="TAIR"/>
</dbReference>
<dbReference type="GO" id="GO:0005829">
    <property type="term" value="C:cytosol"/>
    <property type="evidence" value="ECO:0007005"/>
    <property type="project" value="TAIR"/>
</dbReference>
<dbReference type="GO" id="GO:0009506">
    <property type="term" value="C:plasmodesma"/>
    <property type="evidence" value="ECO:0007005"/>
    <property type="project" value="TAIR"/>
</dbReference>
<dbReference type="GO" id="GO:0009536">
    <property type="term" value="C:plastid"/>
    <property type="evidence" value="ECO:0007005"/>
    <property type="project" value="TAIR"/>
</dbReference>
<dbReference type="GO" id="GO:0017168">
    <property type="term" value="F:5-oxoprolinase (ATP-hydrolyzing) activity"/>
    <property type="evidence" value="ECO:0000315"/>
    <property type="project" value="TAIR"/>
</dbReference>
<dbReference type="GO" id="GO:0005524">
    <property type="term" value="F:ATP binding"/>
    <property type="evidence" value="ECO:0007669"/>
    <property type="project" value="UniProtKB-KW"/>
</dbReference>
<dbReference type="GO" id="GO:0006751">
    <property type="term" value="P:glutathione catabolic process"/>
    <property type="evidence" value="ECO:0000315"/>
    <property type="project" value="TAIR"/>
</dbReference>
<dbReference type="InterPro" id="IPR049517">
    <property type="entry name" value="ACX-like_C"/>
</dbReference>
<dbReference type="InterPro" id="IPR008040">
    <property type="entry name" value="Hydant_A_N"/>
</dbReference>
<dbReference type="InterPro" id="IPR002821">
    <property type="entry name" value="Hydantoinase_A"/>
</dbReference>
<dbReference type="InterPro" id="IPR003692">
    <property type="entry name" value="Hydantoinase_B"/>
</dbReference>
<dbReference type="InterPro" id="IPR045079">
    <property type="entry name" value="Oxoprolinase-like"/>
</dbReference>
<dbReference type="PANTHER" id="PTHR11365:SF2">
    <property type="entry name" value="5-OXOPROLINASE"/>
    <property type="match status" value="1"/>
</dbReference>
<dbReference type="PANTHER" id="PTHR11365">
    <property type="entry name" value="5-OXOPROLINASE RELATED"/>
    <property type="match status" value="1"/>
</dbReference>
<dbReference type="Pfam" id="PF19278">
    <property type="entry name" value="Hydant_A_C"/>
    <property type="match status" value="1"/>
</dbReference>
<dbReference type="Pfam" id="PF05378">
    <property type="entry name" value="Hydant_A_N"/>
    <property type="match status" value="1"/>
</dbReference>
<dbReference type="Pfam" id="PF01968">
    <property type="entry name" value="Hydantoinase_A"/>
    <property type="match status" value="1"/>
</dbReference>
<dbReference type="Pfam" id="PF02538">
    <property type="entry name" value="Hydantoinase_B"/>
    <property type="match status" value="1"/>
</dbReference>
<accession>Q9FIZ7</accession>
<accession>Q0WQ06</accession>
<evidence type="ECO:0000269" key="1">
    <source>
    </source>
</evidence>
<evidence type="ECO:0000303" key="2">
    <source>
    </source>
</evidence>
<evidence type="ECO:0000305" key="3"/>
<evidence type="ECO:0000305" key="4">
    <source>
    </source>
</evidence>
<evidence type="ECO:0000312" key="5">
    <source>
        <dbReference type="Araport" id="AT5G37830"/>
    </source>
</evidence>
<evidence type="ECO:0000312" key="6">
    <source>
        <dbReference type="EMBL" id="BAB10362.1"/>
    </source>
</evidence>
<organism>
    <name type="scientific">Arabidopsis thaliana</name>
    <name type="common">Mouse-ear cress</name>
    <dbReference type="NCBI Taxonomy" id="3702"/>
    <lineage>
        <taxon>Eukaryota</taxon>
        <taxon>Viridiplantae</taxon>
        <taxon>Streptophyta</taxon>
        <taxon>Embryophyta</taxon>
        <taxon>Tracheophyta</taxon>
        <taxon>Spermatophyta</taxon>
        <taxon>Magnoliopsida</taxon>
        <taxon>eudicotyledons</taxon>
        <taxon>Gunneridae</taxon>
        <taxon>Pentapetalae</taxon>
        <taxon>rosids</taxon>
        <taxon>malvids</taxon>
        <taxon>Brassicales</taxon>
        <taxon>Brassicaceae</taxon>
        <taxon>Camelineae</taxon>
        <taxon>Arabidopsis</taxon>
    </lineage>
</organism>
<gene>
    <name evidence="2" type="primary">OXP1</name>
    <name evidence="5" type="ordered locus">At5g37830</name>
    <name evidence="6" type="ORF">K22F20.70</name>
</gene>
<keyword id="KW-0067">ATP-binding</keyword>
<keyword id="KW-0963">Cytoplasm</keyword>
<keyword id="KW-0378">Hydrolase</keyword>
<keyword id="KW-0547">Nucleotide-binding</keyword>
<keyword id="KW-1185">Reference proteome</keyword>
<comment type="function">
    <text evidence="1">Catalyzes the cleavage of 5-oxo-L-proline to form L-glutamate coupled to the hydrolysis of ATP to ADP and inorganic phosphate. Acts in the glutathione degradation pathway.</text>
</comment>
<comment type="catalytic activity">
    <reaction evidence="1">
        <text>5-oxo-L-proline + ATP + 2 H2O = L-glutamate + ADP + phosphate + H(+)</text>
        <dbReference type="Rhea" id="RHEA:10348"/>
        <dbReference type="ChEBI" id="CHEBI:15377"/>
        <dbReference type="ChEBI" id="CHEBI:15378"/>
        <dbReference type="ChEBI" id="CHEBI:29985"/>
        <dbReference type="ChEBI" id="CHEBI:30616"/>
        <dbReference type="ChEBI" id="CHEBI:43474"/>
        <dbReference type="ChEBI" id="CHEBI:58402"/>
        <dbReference type="ChEBI" id="CHEBI:456216"/>
        <dbReference type="EC" id="3.5.2.9"/>
    </reaction>
</comment>
<comment type="subcellular location">
    <subcellularLocation>
        <location evidence="4">Cytoplasm</location>
    </subcellularLocation>
</comment>
<comment type="tissue specificity">
    <text evidence="1">Expressed in roots, stems, leaves, flowers and siliques.</text>
</comment>
<comment type="disruption phenotype">
    <text evidence="1">No morphological phenotype, but high accumulation of 5-oxoproline and decreased concentration of glutamate.</text>
</comment>
<comment type="similarity">
    <text evidence="3">Belongs to the oxoprolinase family.</text>
</comment>